<name>RS20_SYNS3</name>
<protein>
    <recommendedName>
        <fullName evidence="1">Small ribosomal subunit protein bS20</fullName>
    </recommendedName>
    <alternativeName>
        <fullName evidence="2">30S ribosomal protein S20</fullName>
    </alternativeName>
</protein>
<reference key="1">
    <citation type="journal article" date="2006" name="Proc. Natl. Acad. Sci. U.S.A.">
        <title>Genome sequence of Synechococcus CC9311: insights into adaptation to a coastal environment.</title>
        <authorList>
            <person name="Palenik B."/>
            <person name="Ren Q."/>
            <person name="Dupont C.L."/>
            <person name="Myers G.S."/>
            <person name="Heidelberg J.F."/>
            <person name="Badger J.H."/>
            <person name="Madupu R."/>
            <person name="Nelson W.C."/>
            <person name="Brinkac L.M."/>
            <person name="Dodson R.J."/>
            <person name="Durkin A.S."/>
            <person name="Daugherty S.C."/>
            <person name="Sullivan S.A."/>
            <person name="Khouri H."/>
            <person name="Mohamoud Y."/>
            <person name="Halpin R."/>
            <person name="Paulsen I.T."/>
        </authorList>
    </citation>
    <scope>NUCLEOTIDE SEQUENCE [LARGE SCALE GENOMIC DNA]</scope>
    <source>
        <strain>CC9311</strain>
    </source>
</reference>
<gene>
    <name evidence="1" type="primary">rpsT</name>
    <name evidence="1" type="synonym">rps20</name>
    <name type="ordered locus">sync_2361</name>
</gene>
<accession>Q0I7L4</accession>
<keyword id="KW-1185">Reference proteome</keyword>
<keyword id="KW-0687">Ribonucleoprotein</keyword>
<keyword id="KW-0689">Ribosomal protein</keyword>
<keyword id="KW-0694">RNA-binding</keyword>
<keyword id="KW-0699">rRNA-binding</keyword>
<organism>
    <name type="scientific">Synechococcus sp. (strain CC9311)</name>
    <dbReference type="NCBI Taxonomy" id="64471"/>
    <lineage>
        <taxon>Bacteria</taxon>
        <taxon>Bacillati</taxon>
        <taxon>Cyanobacteriota</taxon>
        <taxon>Cyanophyceae</taxon>
        <taxon>Synechococcales</taxon>
        <taxon>Synechococcaceae</taxon>
        <taxon>Synechococcus</taxon>
    </lineage>
</organism>
<evidence type="ECO:0000255" key="1">
    <source>
        <dbReference type="HAMAP-Rule" id="MF_00500"/>
    </source>
</evidence>
<evidence type="ECO:0000305" key="2"/>
<dbReference type="EMBL" id="CP000435">
    <property type="protein sequence ID" value="ABI45496.1"/>
    <property type="molecule type" value="Genomic_DNA"/>
</dbReference>
<dbReference type="RefSeq" id="WP_011620268.1">
    <property type="nucleotide sequence ID" value="NC_008319.1"/>
</dbReference>
<dbReference type="SMR" id="Q0I7L4"/>
<dbReference type="STRING" id="64471.sync_2361"/>
<dbReference type="KEGG" id="syg:sync_2361"/>
<dbReference type="eggNOG" id="COG0268">
    <property type="taxonomic scope" value="Bacteria"/>
</dbReference>
<dbReference type="HOGENOM" id="CLU_160655_5_0_3"/>
<dbReference type="OrthoDB" id="9808392at2"/>
<dbReference type="Proteomes" id="UP000001961">
    <property type="component" value="Chromosome"/>
</dbReference>
<dbReference type="GO" id="GO:0005829">
    <property type="term" value="C:cytosol"/>
    <property type="evidence" value="ECO:0007669"/>
    <property type="project" value="TreeGrafter"/>
</dbReference>
<dbReference type="GO" id="GO:0015935">
    <property type="term" value="C:small ribosomal subunit"/>
    <property type="evidence" value="ECO:0007669"/>
    <property type="project" value="TreeGrafter"/>
</dbReference>
<dbReference type="GO" id="GO:0070181">
    <property type="term" value="F:small ribosomal subunit rRNA binding"/>
    <property type="evidence" value="ECO:0007669"/>
    <property type="project" value="TreeGrafter"/>
</dbReference>
<dbReference type="GO" id="GO:0003735">
    <property type="term" value="F:structural constituent of ribosome"/>
    <property type="evidence" value="ECO:0007669"/>
    <property type="project" value="InterPro"/>
</dbReference>
<dbReference type="GO" id="GO:0006412">
    <property type="term" value="P:translation"/>
    <property type="evidence" value="ECO:0007669"/>
    <property type="project" value="UniProtKB-UniRule"/>
</dbReference>
<dbReference type="Gene3D" id="1.20.58.110">
    <property type="entry name" value="Ribosomal protein S20"/>
    <property type="match status" value="1"/>
</dbReference>
<dbReference type="HAMAP" id="MF_00500">
    <property type="entry name" value="Ribosomal_bS20"/>
    <property type="match status" value="1"/>
</dbReference>
<dbReference type="InterPro" id="IPR002583">
    <property type="entry name" value="Ribosomal_bS20"/>
</dbReference>
<dbReference type="InterPro" id="IPR036510">
    <property type="entry name" value="Ribosomal_bS20_sf"/>
</dbReference>
<dbReference type="NCBIfam" id="TIGR00029">
    <property type="entry name" value="S20"/>
    <property type="match status" value="1"/>
</dbReference>
<dbReference type="PANTHER" id="PTHR33398">
    <property type="entry name" value="30S RIBOSOMAL PROTEIN S20"/>
    <property type="match status" value="1"/>
</dbReference>
<dbReference type="PANTHER" id="PTHR33398:SF1">
    <property type="entry name" value="SMALL RIBOSOMAL SUBUNIT PROTEIN BS20C"/>
    <property type="match status" value="1"/>
</dbReference>
<dbReference type="Pfam" id="PF01649">
    <property type="entry name" value="Ribosomal_S20p"/>
    <property type="match status" value="1"/>
</dbReference>
<dbReference type="SUPFAM" id="SSF46992">
    <property type="entry name" value="Ribosomal protein S20"/>
    <property type="match status" value="1"/>
</dbReference>
<sequence length="99" mass="10909">MANNKSSKKRVEIGERNRLQNKAYKSALRTLMKRCFTACSAYIEAPGDEAKTTLTTSLNAAFSKIDKAVKRGVMHRNAGAHQKSRLSIAVKRAIEPSVS</sequence>
<comment type="function">
    <text evidence="1">Binds directly to 16S ribosomal RNA.</text>
</comment>
<comment type="similarity">
    <text evidence="1">Belongs to the bacterial ribosomal protein bS20 family.</text>
</comment>
<feature type="chain" id="PRO_1000014669" description="Small ribosomal subunit protein bS20">
    <location>
        <begin position="1"/>
        <end position="99"/>
    </location>
</feature>
<proteinExistence type="inferred from homology"/>